<evidence type="ECO:0000250" key="1"/>
<evidence type="ECO:0000255" key="2"/>
<evidence type="ECO:0000305" key="3"/>
<accession>Q9LZS9</accession>
<accession>F4KGN8</accession>
<reference key="1">
    <citation type="journal article" date="2000" name="Nature">
        <title>Sequence and analysis of chromosome 5 of the plant Arabidopsis thaliana.</title>
        <authorList>
            <person name="Tabata S."/>
            <person name="Kaneko T."/>
            <person name="Nakamura Y."/>
            <person name="Kotani H."/>
            <person name="Kato T."/>
            <person name="Asamizu E."/>
            <person name="Miyajima N."/>
            <person name="Sasamoto S."/>
            <person name="Kimura T."/>
            <person name="Hosouchi T."/>
            <person name="Kawashima K."/>
            <person name="Kohara M."/>
            <person name="Matsumoto M."/>
            <person name="Matsuno A."/>
            <person name="Muraki A."/>
            <person name="Nakayama S."/>
            <person name="Nakazaki N."/>
            <person name="Naruo K."/>
            <person name="Okumura S."/>
            <person name="Shinpo S."/>
            <person name="Takeuchi C."/>
            <person name="Wada T."/>
            <person name="Watanabe A."/>
            <person name="Yamada M."/>
            <person name="Yasuda M."/>
            <person name="Sato S."/>
            <person name="de la Bastide M."/>
            <person name="Huang E."/>
            <person name="Spiegel L."/>
            <person name="Gnoj L."/>
            <person name="O'Shaughnessy A."/>
            <person name="Preston R."/>
            <person name="Habermann K."/>
            <person name="Murray J."/>
            <person name="Johnson D."/>
            <person name="Rohlfing T."/>
            <person name="Nelson J."/>
            <person name="Stoneking T."/>
            <person name="Pepin K."/>
            <person name="Spieth J."/>
            <person name="Sekhon M."/>
            <person name="Armstrong J."/>
            <person name="Becker M."/>
            <person name="Belter E."/>
            <person name="Cordum H."/>
            <person name="Cordes M."/>
            <person name="Courtney L."/>
            <person name="Courtney W."/>
            <person name="Dante M."/>
            <person name="Du H."/>
            <person name="Edwards J."/>
            <person name="Fryman J."/>
            <person name="Haakensen B."/>
            <person name="Lamar E."/>
            <person name="Latreille P."/>
            <person name="Leonard S."/>
            <person name="Meyer R."/>
            <person name="Mulvaney E."/>
            <person name="Ozersky P."/>
            <person name="Riley A."/>
            <person name="Strowmatt C."/>
            <person name="Wagner-McPherson C."/>
            <person name="Wollam A."/>
            <person name="Yoakum M."/>
            <person name="Bell M."/>
            <person name="Dedhia N."/>
            <person name="Parnell L."/>
            <person name="Shah R."/>
            <person name="Rodriguez M."/>
            <person name="Hoon See L."/>
            <person name="Vil D."/>
            <person name="Baker J."/>
            <person name="Kirchoff K."/>
            <person name="Toth K."/>
            <person name="King L."/>
            <person name="Bahret A."/>
            <person name="Miller B."/>
            <person name="Marra M.A."/>
            <person name="Martienssen R."/>
            <person name="McCombie W.R."/>
            <person name="Wilson R.K."/>
            <person name="Murphy G."/>
            <person name="Bancroft I."/>
            <person name="Volckaert G."/>
            <person name="Wambutt R."/>
            <person name="Duesterhoeft A."/>
            <person name="Stiekema W."/>
            <person name="Pohl T."/>
            <person name="Entian K.-D."/>
            <person name="Terryn N."/>
            <person name="Hartley N."/>
            <person name="Bent E."/>
            <person name="Johnson S."/>
            <person name="Langham S.-A."/>
            <person name="McCullagh B."/>
            <person name="Robben J."/>
            <person name="Grymonprez B."/>
            <person name="Zimmermann W."/>
            <person name="Ramsperger U."/>
            <person name="Wedler H."/>
            <person name="Balke K."/>
            <person name="Wedler E."/>
            <person name="Peters S."/>
            <person name="van Staveren M."/>
            <person name="Dirkse W."/>
            <person name="Mooijman P."/>
            <person name="Klein Lankhorst R."/>
            <person name="Weitzenegger T."/>
            <person name="Bothe G."/>
            <person name="Rose M."/>
            <person name="Hauf J."/>
            <person name="Berneiser S."/>
            <person name="Hempel S."/>
            <person name="Feldpausch M."/>
            <person name="Lamberth S."/>
            <person name="Villarroel R."/>
            <person name="Gielen J."/>
            <person name="Ardiles W."/>
            <person name="Bents O."/>
            <person name="Lemcke K."/>
            <person name="Kolesov G."/>
            <person name="Mayer K.F.X."/>
            <person name="Rudd S."/>
            <person name="Schoof H."/>
            <person name="Schueller C."/>
            <person name="Zaccaria P."/>
            <person name="Mewes H.-W."/>
            <person name="Bevan M."/>
            <person name="Fransz P.F."/>
        </authorList>
    </citation>
    <scope>NUCLEOTIDE SEQUENCE [LARGE SCALE GENOMIC DNA]</scope>
    <source>
        <strain>cv. Columbia</strain>
    </source>
</reference>
<reference key="2">
    <citation type="journal article" date="2017" name="Plant J.">
        <title>Araport11: a complete reannotation of the Arabidopsis thaliana reference genome.</title>
        <authorList>
            <person name="Cheng C.Y."/>
            <person name="Krishnakumar V."/>
            <person name="Chan A.P."/>
            <person name="Thibaud-Nissen F."/>
            <person name="Schobel S."/>
            <person name="Town C.D."/>
        </authorList>
    </citation>
    <scope>GENOME REANNOTATION</scope>
    <source>
        <strain>cv. Columbia</strain>
    </source>
</reference>
<reference key="3">
    <citation type="journal article" date="2004" name="Prog. Lipid Res.">
        <title>GDSL family of serine esterases/lipases.</title>
        <authorList>
            <person name="Akoh C.C."/>
            <person name="Lee G.-C."/>
            <person name="Liaw Y.-C."/>
            <person name="Huang T.-H."/>
            <person name="Shaw J.-F."/>
        </authorList>
    </citation>
    <scope>REVIEW</scope>
</reference>
<reference key="4">
    <citation type="journal article" date="2008" name="Pak. J. Biol. Sci.">
        <title>Sequence analysis of GDSL lipase gene family in Arabidopsis thaliana.</title>
        <authorList>
            <person name="Ling H."/>
        </authorList>
    </citation>
    <scope>GENE FAMILY</scope>
</reference>
<comment type="subcellular location">
    <subcellularLocation>
        <location evidence="3">Secreted</location>
    </subcellularLocation>
</comment>
<comment type="similarity">
    <text evidence="3">Belongs to the 'GDSL' lipolytic enzyme family.</text>
</comment>
<comment type="sequence caution" evidence="3">
    <conflict type="erroneous gene model prediction">
        <sequence resource="EMBL-CDS" id="AED90631"/>
    </conflict>
</comment>
<comment type="sequence caution" evidence="3">
    <conflict type="erroneous termination">
        <sequence resource="EMBL-CDS" id="AED90631"/>
    </conflict>
    <text>Truncated C-terminus.</text>
</comment>
<comment type="sequence caution" evidence="3">
    <conflict type="erroneous gene model prediction">
        <sequence resource="EMBL-CDS" id="CAB82924"/>
    </conflict>
</comment>
<comment type="sequence caution" evidence="3">
    <conflict type="erroneous termination">
        <sequence resource="EMBL-CDS" id="CAB82924"/>
    </conflict>
    <text>Truncated C-terminus.</text>
</comment>
<dbReference type="EC" id="3.1.1.-"/>
<dbReference type="EMBL" id="AL162506">
    <property type="protein sequence ID" value="CAB82924.1"/>
    <property type="status" value="ALT_SEQ"/>
    <property type="molecule type" value="Genomic_DNA"/>
</dbReference>
<dbReference type="EMBL" id="CP002688">
    <property type="protein sequence ID" value="AED90631.1"/>
    <property type="status" value="ALT_SEQ"/>
    <property type="molecule type" value="Genomic_DNA"/>
</dbReference>
<dbReference type="PIR" id="T48386">
    <property type="entry name" value="T48386"/>
</dbReference>
<dbReference type="RefSeq" id="NP_195979.1">
    <property type="nucleotide sequence ID" value="NM_120440.2"/>
</dbReference>
<dbReference type="SMR" id="Q9LZS9"/>
<dbReference type="FunCoup" id="Q9LZS9">
    <property type="interactions" value="24"/>
</dbReference>
<dbReference type="STRING" id="3702.Q9LZS9"/>
<dbReference type="GlyGen" id="Q9LZS9">
    <property type="glycosylation" value="3 sites"/>
</dbReference>
<dbReference type="GeneID" id="831783"/>
<dbReference type="KEGG" id="ath:AT5G03590"/>
<dbReference type="Araport" id="AT5G03590"/>
<dbReference type="TAIR" id="AT5G03590"/>
<dbReference type="InParanoid" id="Q9LZS9"/>
<dbReference type="PhylomeDB" id="Q9LZS9"/>
<dbReference type="PRO" id="PR:Q9LZS9"/>
<dbReference type="Proteomes" id="UP000006548">
    <property type="component" value="Chromosome 5"/>
</dbReference>
<dbReference type="ExpressionAtlas" id="Q9LZS9">
    <property type="expression patterns" value="baseline and differential"/>
</dbReference>
<dbReference type="GO" id="GO:0005576">
    <property type="term" value="C:extracellular region"/>
    <property type="evidence" value="ECO:0007669"/>
    <property type="project" value="UniProtKB-SubCell"/>
</dbReference>
<dbReference type="GO" id="GO:0016788">
    <property type="term" value="F:hydrolase activity, acting on ester bonds"/>
    <property type="evidence" value="ECO:0007669"/>
    <property type="project" value="InterPro"/>
</dbReference>
<dbReference type="GO" id="GO:0016042">
    <property type="term" value="P:lipid catabolic process"/>
    <property type="evidence" value="ECO:0007669"/>
    <property type="project" value="UniProtKB-KW"/>
</dbReference>
<dbReference type="Gene3D" id="3.40.50.1110">
    <property type="entry name" value="SGNH hydrolase"/>
    <property type="match status" value="1"/>
</dbReference>
<dbReference type="InterPro" id="IPR001087">
    <property type="entry name" value="GDSL"/>
</dbReference>
<dbReference type="InterPro" id="IPR036514">
    <property type="entry name" value="SGNH_hydro_sf"/>
</dbReference>
<dbReference type="PANTHER" id="PTHR46020:SF32">
    <property type="entry name" value="GDSL ESTERASE_LIPASE"/>
    <property type="match status" value="1"/>
</dbReference>
<dbReference type="PANTHER" id="PTHR46020">
    <property type="entry name" value="OSJNBB0059K02.9 PROTEIN"/>
    <property type="match status" value="1"/>
</dbReference>
<dbReference type="Pfam" id="PF00657">
    <property type="entry name" value="Lipase_GDSL"/>
    <property type="match status" value="1"/>
</dbReference>
<protein>
    <recommendedName>
        <fullName>GDSL esterase/lipase At5g03590</fullName>
        <ecNumber>3.1.1.-</ecNumber>
    </recommendedName>
    <alternativeName>
        <fullName>Extracellular lipase At5g03590</fullName>
    </alternativeName>
</protein>
<name>GDL69_ARATH</name>
<proteinExistence type="inferred from homology"/>
<keyword id="KW-0325">Glycoprotein</keyword>
<keyword id="KW-0378">Hydrolase</keyword>
<keyword id="KW-0442">Lipid degradation</keyword>
<keyword id="KW-0443">Lipid metabolism</keyword>
<keyword id="KW-1185">Reference proteome</keyword>
<keyword id="KW-0964">Secreted</keyword>
<keyword id="KW-0732">Signal</keyword>
<feature type="signal peptide" evidence="2">
    <location>
        <begin position="1"/>
        <end position="19"/>
    </location>
</feature>
<feature type="chain" id="PRO_0000367409" description="GDSL esterase/lipase At5g03590">
    <location>
        <begin position="20"/>
        <end position="344"/>
    </location>
</feature>
<feature type="active site" description="Nucleophile" evidence="1">
    <location>
        <position position="41"/>
    </location>
</feature>
<feature type="active site" evidence="1">
    <location>
        <position position="318"/>
    </location>
</feature>
<feature type="glycosylation site" description="N-linked (GlcNAc...) asparagine" evidence="2">
    <location>
        <position position="126"/>
    </location>
</feature>
<feature type="glycosylation site" description="N-linked (GlcNAc...) asparagine" evidence="2">
    <location>
        <position position="227"/>
    </location>
</feature>
<feature type="glycosylation site" description="N-linked (GlcNAc...) asparagine" evidence="2">
    <location>
        <position position="238"/>
    </location>
</feature>
<sequence length="344" mass="38427">MHYLMKLFFSLSLFFGINGAVGSNQPSQANKNPKLFVFGNSYADTGNMKPTALSWKLPYGITFPGKPSGRYSDGLTATDFLAKQLGAKLPYLWRTHGKKKVKLNRGMNFAFGGSEVFDSPVDRSPNISTQVGFLVNLALARRVYTIDGDLASSYALLSYSGTDYYGFIDQNPNMAAYPAFVEFIVEDIQYSLGIMNGLKFKNIAVTSLHPLGCLPRVTVASSFRSCNESYSDLVRLHNESLKKAVAKLNKEDKFRTKGDRFVIVDLHKAFMTILEKKGNKRFKSPLKPCCEGDCARMDMKGAKKYTLCNDPKSAFFWDEINPTQEGWRSIYSLLGKSLTESLTK</sequence>
<organism>
    <name type="scientific">Arabidopsis thaliana</name>
    <name type="common">Mouse-ear cress</name>
    <dbReference type="NCBI Taxonomy" id="3702"/>
    <lineage>
        <taxon>Eukaryota</taxon>
        <taxon>Viridiplantae</taxon>
        <taxon>Streptophyta</taxon>
        <taxon>Embryophyta</taxon>
        <taxon>Tracheophyta</taxon>
        <taxon>Spermatophyta</taxon>
        <taxon>Magnoliopsida</taxon>
        <taxon>eudicotyledons</taxon>
        <taxon>Gunneridae</taxon>
        <taxon>Pentapetalae</taxon>
        <taxon>rosids</taxon>
        <taxon>malvids</taxon>
        <taxon>Brassicales</taxon>
        <taxon>Brassicaceae</taxon>
        <taxon>Camelineae</taxon>
        <taxon>Arabidopsis</taxon>
    </lineage>
</organism>
<gene>
    <name type="ordered locus">At5g03590</name>
    <name type="ORF">F17C15.10</name>
</gene>